<evidence type="ECO:0000250" key="1"/>
<evidence type="ECO:0000305" key="2"/>
<comment type="function">
    <text evidence="1">Catalyzes the reduction of a carbon-carbon double bond in an enoyl moiety that is covalently linked to an acyl carrier protein (ACP). Involved in the elongation cycle of fatty acid which are used in the lipid metabolism (By similarity).</text>
</comment>
<comment type="catalytic activity">
    <reaction>
        <text>a 2,3-saturated acyl-[ACP] + NAD(+) = a (2E)-enoyl-[ACP] + NADH + H(+)</text>
        <dbReference type="Rhea" id="RHEA:10240"/>
        <dbReference type="Rhea" id="RHEA-COMP:9925"/>
        <dbReference type="Rhea" id="RHEA-COMP:9926"/>
        <dbReference type="ChEBI" id="CHEBI:15378"/>
        <dbReference type="ChEBI" id="CHEBI:57540"/>
        <dbReference type="ChEBI" id="CHEBI:57945"/>
        <dbReference type="ChEBI" id="CHEBI:78784"/>
        <dbReference type="ChEBI" id="CHEBI:78785"/>
        <dbReference type="EC" id="1.3.1.9"/>
    </reaction>
</comment>
<comment type="pathway">
    <text>Lipid metabolism; fatty acid biosynthesis.</text>
</comment>
<comment type="subunit">
    <text evidence="1">Homotetramer.</text>
</comment>
<comment type="similarity">
    <text evidence="2">Belongs to the short-chain dehydrogenases/reductases (SDR) family. FabI subfamily.</text>
</comment>
<comment type="sequence caution" evidence="2">
    <conflict type="erroneous initiation">
        <sequence resource="EMBL-CDS" id="AAD04184"/>
    </conflict>
    <text>Extended N-terminus.</text>
</comment>
<comment type="sequence caution" evidence="2">
    <conflict type="erroneous initiation">
        <sequence resource="EMBL-CDS" id="BAB76090"/>
    </conflict>
    <text>Extended N-terminus.</text>
</comment>
<protein>
    <recommendedName>
        <fullName>Enoyl-[acyl-carrier-protein] reductase [NADH] FabI</fullName>
        <shortName>ENR</shortName>
        <ecNumber>1.3.1.9</ecNumber>
    </recommendedName>
    <alternativeName>
        <fullName>NADH-dependent enoyl-ACP reductase</fullName>
    </alternativeName>
</protein>
<gene>
    <name type="primary">fabI</name>
    <name type="ordered locus">all4391</name>
</gene>
<keyword id="KW-0275">Fatty acid biosynthesis</keyword>
<keyword id="KW-0276">Fatty acid metabolism</keyword>
<keyword id="KW-0444">Lipid biosynthesis</keyword>
<keyword id="KW-0443">Lipid metabolism</keyword>
<keyword id="KW-0520">NAD</keyword>
<keyword id="KW-0560">Oxidoreductase</keyword>
<keyword id="KW-1185">Reference proteome</keyword>
<proteinExistence type="inferred from homology"/>
<name>FABI_NOSS1</name>
<organism>
    <name type="scientific">Nostoc sp. (strain PCC 7120 / SAG 25.82 / UTEX 2576)</name>
    <dbReference type="NCBI Taxonomy" id="103690"/>
    <lineage>
        <taxon>Bacteria</taxon>
        <taxon>Bacillati</taxon>
        <taxon>Cyanobacteriota</taxon>
        <taxon>Cyanophyceae</taxon>
        <taxon>Nostocales</taxon>
        <taxon>Nostocaceae</taxon>
        <taxon>Nostoc</taxon>
    </lineage>
</organism>
<accession>Q05069</accession>
<feature type="chain" id="PRO_0000054893" description="Enoyl-[acyl-carrier-protein] reductase [NADH] FabI">
    <location>
        <begin position="1"/>
        <end position="258"/>
    </location>
</feature>
<feature type="active site" description="Proton acceptor" evidence="1">
    <location>
        <position position="148"/>
    </location>
</feature>
<feature type="active site" description="Proton acceptor" evidence="1">
    <location>
        <position position="158"/>
    </location>
</feature>
<feature type="binding site" evidence="1">
    <location>
        <position position="13"/>
    </location>
    <ligand>
        <name>NAD(+)</name>
        <dbReference type="ChEBI" id="CHEBI:57540"/>
    </ligand>
</feature>
<feature type="binding site" evidence="1">
    <location>
        <begin position="19"/>
        <end position="20"/>
    </location>
    <ligand>
        <name>NAD(+)</name>
        <dbReference type="ChEBI" id="CHEBI:57540"/>
    </ligand>
</feature>
<feature type="binding site" evidence="1">
    <location>
        <begin position="67"/>
        <end position="68"/>
    </location>
    <ligand>
        <name>NAD(+)</name>
        <dbReference type="ChEBI" id="CHEBI:57540"/>
    </ligand>
</feature>
<feature type="binding site" evidence="1">
    <location>
        <position position="95"/>
    </location>
    <ligand>
        <name>NAD(+)</name>
        <dbReference type="ChEBI" id="CHEBI:57540"/>
    </ligand>
</feature>
<feature type="binding site" evidence="1">
    <location>
        <position position="98"/>
    </location>
    <ligand>
        <name>substrate</name>
    </ligand>
</feature>
<feature type="binding site" evidence="1">
    <location>
        <position position="165"/>
    </location>
    <ligand>
        <name>NAD(+)</name>
        <dbReference type="ChEBI" id="CHEBI:57540"/>
    </ligand>
</feature>
<feature type="binding site" evidence="1">
    <location>
        <begin position="194"/>
        <end position="198"/>
    </location>
    <ligand>
        <name>NAD(+)</name>
        <dbReference type="ChEBI" id="CHEBI:57540"/>
    </ligand>
</feature>
<reference key="1">
    <citation type="journal article" date="1993" name="J. Bacteriol.">
        <title>Anabaena sp. strain PCC 7120 bifA gene encoding a sequence-specific DNA-binding protein cloned by in vivo transcriptional interference selection.</title>
        <authorList>
            <person name="Wei T.-F."/>
            <person name="Ramasubramanian T.S."/>
            <person name="Pu F."/>
            <person name="Golden J.W."/>
        </authorList>
    </citation>
    <scope>NUCLEOTIDE SEQUENCE [GENOMIC DNA]</scope>
</reference>
<reference key="2">
    <citation type="journal article" date="2001" name="DNA Res.">
        <title>Complete genomic sequence of the filamentous nitrogen-fixing cyanobacterium Anabaena sp. strain PCC 7120.</title>
        <authorList>
            <person name="Kaneko T."/>
            <person name="Nakamura Y."/>
            <person name="Wolk C.P."/>
            <person name="Kuritz T."/>
            <person name="Sasamoto S."/>
            <person name="Watanabe A."/>
            <person name="Iriguchi M."/>
            <person name="Ishikawa A."/>
            <person name="Kawashima K."/>
            <person name="Kimura T."/>
            <person name="Kishida Y."/>
            <person name="Kohara M."/>
            <person name="Matsumoto M."/>
            <person name="Matsuno A."/>
            <person name="Muraki A."/>
            <person name="Nakazaki N."/>
            <person name="Shimpo S."/>
            <person name="Sugimoto M."/>
            <person name="Takazawa M."/>
            <person name="Yamada M."/>
            <person name="Yasuda M."/>
            <person name="Tabata S."/>
        </authorList>
    </citation>
    <scope>NUCLEOTIDE SEQUENCE [LARGE SCALE GENOMIC DNA]</scope>
    <source>
        <strain>PCC 7120 / SAG 25.82 / UTEX 2576</strain>
    </source>
</reference>
<dbReference type="EC" id="1.3.1.9"/>
<dbReference type="EMBL" id="L10036">
    <property type="protein sequence ID" value="AAD04184.1"/>
    <property type="status" value="ALT_INIT"/>
    <property type="molecule type" value="Genomic_DNA"/>
</dbReference>
<dbReference type="EMBL" id="BA000019">
    <property type="protein sequence ID" value="BAB76090.1"/>
    <property type="status" value="ALT_INIT"/>
    <property type="molecule type" value="Genomic_DNA"/>
</dbReference>
<dbReference type="PIR" id="AG2354">
    <property type="entry name" value="AG2354"/>
</dbReference>
<dbReference type="RefSeq" id="WP_041456288.1">
    <property type="nucleotide sequence ID" value="NZ_RSCN01000051.1"/>
</dbReference>
<dbReference type="SMR" id="Q05069"/>
<dbReference type="STRING" id="103690.gene:10496440"/>
<dbReference type="GeneID" id="58726068"/>
<dbReference type="KEGG" id="ana:all4391"/>
<dbReference type="eggNOG" id="COG0623">
    <property type="taxonomic scope" value="Bacteria"/>
</dbReference>
<dbReference type="OrthoDB" id="9803628at2"/>
<dbReference type="UniPathway" id="UPA00094"/>
<dbReference type="Proteomes" id="UP000002483">
    <property type="component" value="Chromosome"/>
</dbReference>
<dbReference type="GO" id="GO:0004318">
    <property type="term" value="F:enoyl-[acyl-carrier-protein] reductase (NADH) activity"/>
    <property type="evidence" value="ECO:0000250"/>
    <property type="project" value="UniProtKB"/>
</dbReference>
<dbReference type="GO" id="GO:0042802">
    <property type="term" value="F:identical protein binding"/>
    <property type="evidence" value="ECO:0000250"/>
    <property type="project" value="UniProtKB"/>
</dbReference>
<dbReference type="GO" id="GO:0030497">
    <property type="term" value="P:fatty acid elongation"/>
    <property type="evidence" value="ECO:0000250"/>
    <property type="project" value="UniProtKB"/>
</dbReference>
<dbReference type="CDD" id="cd05372">
    <property type="entry name" value="ENR_SDR"/>
    <property type="match status" value="1"/>
</dbReference>
<dbReference type="FunFam" id="1.10.8.400:FF:000001">
    <property type="entry name" value="Enoyl-[acyl-carrier-protein] reductase [NADH]"/>
    <property type="match status" value="1"/>
</dbReference>
<dbReference type="FunFam" id="3.40.50.720:FF:000054">
    <property type="entry name" value="Enoyl-[acyl-carrier-protein] reductase [NADH]"/>
    <property type="match status" value="1"/>
</dbReference>
<dbReference type="Gene3D" id="1.10.8.400">
    <property type="entry name" value="Enoyl acyl carrier protein reductase"/>
    <property type="match status" value="1"/>
</dbReference>
<dbReference type="Gene3D" id="3.40.50.720">
    <property type="entry name" value="NAD(P)-binding Rossmann-like Domain"/>
    <property type="match status" value="1"/>
</dbReference>
<dbReference type="InterPro" id="IPR014358">
    <property type="entry name" value="Enoyl-ACP_Rdtase_NADH"/>
</dbReference>
<dbReference type="InterPro" id="IPR036291">
    <property type="entry name" value="NAD(P)-bd_dom_sf"/>
</dbReference>
<dbReference type="InterPro" id="IPR002347">
    <property type="entry name" value="SDR_fam"/>
</dbReference>
<dbReference type="NCBIfam" id="NF005615">
    <property type="entry name" value="PRK07370.1"/>
    <property type="match status" value="1"/>
</dbReference>
<dbReference type="PANTHER" id="PTHR43159">
    <property type="entry name" value="ENOYL-[ACYL-CARRIER-PROTEIN] REDUCTASE"/>
    <property type="match status" value="1"/>
</dbReference>
<dbReference type="PANTHER" id="PTHR43159:SF2">
    <property type="entry name" value="ENOYL-[ACYL-CARRIER-PROTEIN] REDUCTASE [NADH], CHLOROPLASTIC"/>
    <property type="match status" value="1"/>
</dbReference>
<dbReference type="Pfam" id="PF13561">
    <property type="entry name" value="adh_short_C2"/>
    <property type="match status" value="1"/>
</dbReference>
<dbReference type="PIRSF" id="PIRSF000094">
    <property type="entry name" value="Enoyl-ACP_rdct"/>
    <property type="match status" value="1"/>
</dbReference>
<dbReference type="PRINTS" id="PR00081">
    <property type="entry name" value="GDHRDH"/>
</dbReference>
<dbReference type="SUPFAM" id="SSF51735">
    <property type="entry name" value="NAD(P)-binding Rossmann-fold domains"/>
    <property type="match status" value="1"/>
</dbReference>
<sequence length="258" mass="27421">MLNLTGKNALVTGIANNRSIAWGIAQQLHAAGANLGITYLPDERGKFEKKVSELVEPLNPSLFLPCNVQNDEQIQSTFDTIRDKWGRLDILIHCLAFANRDDLTGDFSQTSRAGFATALDISTFSLVQLSGAAKPLMTEGGSIITLSYLGGVRAVPNYNVMGVAKAGLEASVRYLASELGSQNIRVNAISAGPIRTLASSAVGGILDMIHHVEQVAPLRRTVTQLEVGNTAAFLASDLASGITGQVLYVDAGYEIMGM</sequence>